<organism>
    <name type="scientific">Escherichia coli O6:H1 (strain CFT073 / ATCC 700928 / UPEC)</name>
    <dbReference type="NCBI Taxonomy" id="199310"/>
    <lineage>
        <taxon>Bacteria</taxon>
        <taxon>Pseudomonadati</taxon>
        <taxon>Pseudomonadota</taxon>
        <taxon>Gammaproteobacteria</taxon>
        <taxon>Enterobacterales</taxon>
        <taxon>Enterobacteriaceae</taxon>
        <taxon>Escherichia</taxon>
    </lineage>
</organism>
<name>PIMT_ECOL6</name>
<keyword id="KW-0963">Cytoplasm</keyword>
<keyword id="KW-0489">Methyltransferase</keyword>
<keyword id="KW-1185">Reference proteome</keyword>
<keyword id="KW-0949">S-adenosyl-L-methionine</keyword>
<keyword id="KW-0808">Transferase</keyword>
<accession>Q8FEJ8</accession>
<feature type="initiator methionine" description="Removed" evidence="1">
    <location>
        <position position="1"/>
    </location>
</feature>
<feature type="chain" id="PRO_0000111888" description="Protein-L-isoaspartate O-methyltransferase">
    <location>
        <begin position="2"/>
        <end position="208"/>
    </location>
</feature>
<feature type="active site" evidence="2">
    <location>
        <position position="59"/>
    </location>
</feature>
<reference key="1">
    <citation type="journal article" date="2002" name="Proc. Natl. Acad. Sci. U.S.A.">
        <title>Extensive mosaic structure revealed by the complete genome sequence of uropathogenic Escherichia coli.</title>
        <authorList>
            <person name="Welch R.A."/>
            <person name="Burland V."/>
            <person name="Plunkett G. III"/>
            <person name="Redford P."/>
            <person name="Roesch P."/>
            <person name="Rasko D."/>
            <person name="Buckles E.L."/>
            <person name="Liou S.-R."/>
            <person name="Boutin A."/>
            <person name="Hackett J."/>
            <person name="Stroud D."/>
            <person name="Mayhew G.F."/>
            <person name="Rose D.J."/>
            <person name="Zhou S."/>
            <person name="Schwartz D.C."/>
            <person name="Perna N.T."/>
            <person name="Mobley H.L.T."/>
            <person name="Donnenberg M.S."/>
            <person name="Blattner F.R."/>
        </authorList>
    </citation>
    <scope>NUCLEOTIDE SEQUENCE [LARGE SCALE GENOMIC DNA]</scope>
    <source>
        <strain>CFT073 / ATCC 700928 / UPEC</strain>
    </source>
</reference>
<protein>
    <recommendedName>
        <fullName evidence="2">Protein-L-isoaspartate O-methyltransferase</fullName>
        <ecNumber evidence="2">2.1.1.77</ecNumber>
    </recommendedName>
    <alternativeName>
        <fullName evidence="2">L-isoaspartyl protein carboxyl methyltransferase</fullName>
    </alternativeName>
    <alternativeName>
        <fullName evidence="2">Protein L-isoaspartyl methyltransferase</fullName>
    </alternativeName>
    <alternativeName>
        <fullName evidence="2">Protein-beta-aspartate methyltransferase</fullName>
        <shortName evidence="2">PIMT</shortName>
    </alternativeName>
</protein>
<sequence>MVSRRVQALLDQLRAQGIQDELVLNALAAVPREKFVDEAFEQKAWDNIALPIGQGQTISQPYMVARMTELLELTPQSRVLEIGTGSGYQTAILAHLVQHVCSVERIKGLQWQARRRLKNLDLHNVSTRHGDGWQGWQARAPFDAIIVTAAPPEIPTALMTQLDEGGILVLPVGEEHQYLKRVRRRGGEFIIDTVEAVRFVPLVKGELA</sequence>
<proteinExistence type="inferred from homology"/>
<comment type="function">
    <text evidence="2">Catalyzes the methyl esterification of L-isoaspartyl residues in peptides and proteins that result from spontaneous decomposition of normal L-aspartyl and L-asparaginyl residues. It plays a role in the repair and/or degradation of damaged proteins.</text>
</comment>
<comment type="catalytic activity">
    <reaction evidence="2">
        <text>[protein]-L-isoaspartate + S-adenosyl-L-methionine = [protein]-L-isoaspartate alpha-methyl ester + S-adenosyl-L-homocysteine</text>
        <dbReference type="Rhea" id="RHEA:12705"/>
        <dbReference type="Rhea" id="RHEA-COMP:12143"/>
        <dbReference type="Rhea" id="RHEA-COMP:12144"/>
        <dbReference type="ChEBI" id="CHEBI:57856"/>
        <dbReference type="ChEBI" id="CHEBI:59789"/>
        <dbReference type="ChEBI" id="CHEBI:90596"/>
        <dbReference type="ChEBI" id="CHEBI:90598"/>
        <dbReference type="EC" id="2.1.1.77"/>
    </reaction>
</comment>
<comment type="subcellular location">
    <subcellularLocation>
        <location evidence="2">Cytoplasm</location>
    </subcellularLocation>
</comment>
<comment type="similarity">
    <text evidence="2">Belongs to the methyltransferase superfamily. L-isoaspartyl/D-aspartyl protein methyltransferase family.</text>
</comment>
<gene>
    <name evidence="2" type="primary">pcm</name>
    <name type="ordered locus">c3310</name>
</gene>
<evidence type="ECO:0000250" key="1"/>
<evidence type="ECO:0000255" key="2">
    <source>
        <dbReference type="HAMAP-Rule" id="MF_00090"/>
    </source>
</evidence>
<dbReference type="EC" id="2.1.1.77" evidence="2"/>
<dbReference type="EMBL" id="AE014075">
    <property type="protein sequence ID" value="AAN81759.1"/>
    <property type="molecule type" value="Genomic_DNA"/>
</dbReference>
<dbReference type="RefSeq" id="WP_000254701.1">
    <property type="nucleotide sequence ID" value="NZ_CP051263.1"/>
</dbReference>
<dbReference type="SMR" id="Q8FEJ8"/>
<dbReference type="STRING" id="199310.c3310"/>
<dbReference type="KEGG" id="ecc:c3310"/>
<dbReference type="eggNOG" id="COG2518">
    <property type="taxonomic scope" value="Bacteria"/>
</dbReference>
<dbReference type="HOGENOM" id="CLU_055432_2_0_6"/>
<dbReference type="BioCyc" id="ECOL199310:C3310-MONOMER"/>
<dbReference type="Proteomes" id="UP000001410">
    <property type="component" value="Chromosome"/>
</dbReference>
<dbReference type="GO" id="GO:0005737">
    <property type="term" value="C:cytoplasm"/>
    <property type="evidence" value="ECO:0007669"/>
    <property type="project" value="UniProtKB-SubCell"/>
</dbReference>
<dbReference type="GO" id="GO:0004719">
    <property type="term" value="F:protein-L-isoaspartate (D-aspartate) O-methyltransferase activity"/>
    <property type="evidence" value="ECO:0007669"/>
    <property type="project" value="UniProtKB-UniRule"/>
</dbReference>
<dbReference type="GO" id="GO:0032259">
    <property type="term" value="P:methylation"/>
    <property type="evidence" value="ECO:0007669"/>
    <property type="project" value="UniProtKB-KW"/>
</dbReference>
<dbReference type="GO" id="GO:0036211">
    <property type="term" value="P:protein modification process"/>
    <property type="evidence" value="ECO:0007669"/>
    <property type="project" value="UniProtKB-UniRule"/>
</dbReference>
<dbReference type="GO" id="GO:0030091">
    <property type="term" value="P:protein repair"/>
    <property type="evidence" value="ECO:0007669"/>
    <property type="project" value="UniProtKB-UniRule"/>
</dbReference>
<dbReference type="CDD" id="cd02440">
    <property type="entry name" value="AdoMet_MTases"/>
    <property type="match status" value="1"/>
</dbReference>
<dbReference type="FunFam" id="3.40.50.150:FF:000010">
    <property type="entry name" value="Protein-L-isoaspartate O-methyltransferase"/>
    <property type="match status" value="1"/>
</dbReference>
<dbReference type="Gene3D" id="3.40.50.150">
    <property type="entry name" value="Vaccinia Virus protein VP39"/>
    <property type="match status" value="1"/>
</dbReference>
<dbReference type="HAMAP" id="MF_00090">
    <property type="entry name" value="PIMT"/>
    <property type="match status" value="1"/>
</dbReference>
<dbReference type="InterPro" id="IPR000682">
    <property type="entry name" value="PCMT"/>
</dbReference>
<dbReference type="InterPro" id="IPR029063">
    <property type="entry name" value="SAM-dependent_MTases_sf"/>
</dbReference>
<dbReference type="NCBIfam" id="TIGR00080">
    <property type="entry name" value="pimt"/>
    <property type="match status" value="1"/>
</dbReference>
<dbReference type="NCBIfam" id="NF001453">
    <property type="entry name" value="PRK00312.1"/>
    <property type="match status" value="1"/>
</dbReference>
<dbReference type="PANTHER" id="PTHR11579">
    <property type="entry name" value="PROTEIN-L-ISOASPARTATE O-METHYLTRANSFERASE"/>
    <property type="match status" value="1"/>
</dbReference>
<dbReference type="PANTHER" id="PTHR11579:SF0">
    <property type="entry name" value="PROTEIN-L-ISOASPARTATE(D-ASPARTATE) O-METHYLTRANSFERASE"/>
    <property type="match status" value="1"/>
</dbReference>
<dbReference type="Pfam" id="PF01135">
    <property type="entry name" value="PCMT"/>
    <property type="match status" value="1"/>
</dbReference>
<dbReference type="SUPFAM" id="SSF53335">
    <property type="entry name" value="S-adenosyl-L-methionine-dependent methyltransferases"/>
    <property type="match status" value="1"/>
</dbReference>
<dbReference type="PROSITE" id="PS01279">
    <property type="entry name" value="PCMT"/>
    <property type="match status" value="1"/>
</dbReference>